<organism>
    <name type="scientific">Buchnera aphidicola subsp. Acyrthosiphon pisum (strain Tuc7)</name>
    <dbReference type="NCBI Taxonomy" id="561501"/>
    <lineage>
        <taxon>Bacteria</taxon>
        <taxon>Pseudomonadati</taxon>
        <taxon>Pseudomonadota</taxon>
        <taxon>Gammaproteobacteria</taxon>
        <taxon>Enterobacterales</taxon>
        <taxon>Erwiniaceae</taxon>
        <taxon>Buchnera</taxon>
    </lineage>
</organism>
<feature type="chain" id="PRO_1000194472" description="Ion-translocating oxidoreductase complex subunit B">
    <location>
        <begin position="1"/>
        <end position="167"/>
    </location>
</feature>
<feature type="domain" description="4Fe-4S" evidence="1">
    <location>
        <begin position="28"/>
        <end position="87"/>
    </location>
</feature>
<feature type="domain" description="4Fe-4S ferredoxin-type 1" evidence="1">
    <location>
        <begin position="104"/>
        <end position="133"/>
    </location>
</feature>
<feature type="domain" description="4Fe-4S ferredoxin-type 2" evidence="1">
    <location>
        <begin position="134"/>
        <end position="163"/>
    </location>
</feature>
<feature type="region of interest" description="Hydrophobic" evidence="1">
    <location>
        <begin position="1"/>
        <end position="22"/>
    </location>
</feature>
<feature type="binding site" evidence="1">
    <location>
        <position position="45"/>
    </location>
    <ligand>
        <name>[4Fe-4S] cluster</name>
        <dbReference type="ChEBI" id="CHEBI:49883"/>
        <label>1</label>
    </ligand>
</feature>
<feature type="binding site" evidence="1">
    <location>
        <position position="48"/>
    </location>
    <ligand>
        <name>[4Fe-4S] cluster</name>
        <dbReference type="ChEBI" id="CHEBI:49883"/>
        <label>1</label>
    </ligand>
</feature>
<feature type="binding site" evidence="1">
    <location>
        <position position="53"/>
    </location>
    <ligand>
        <name>[4Fe-4S] cluster</name>
        <dbReference type="ChEBI" id="CHEBI:49883"/>
        <label>1</label>
    </ligand>
</feature>
<feature type="binding site" evidence="1">
    <location>
        <position position="70"/>
    </location>
    <ligand>
        <name>[4Fe-4S] cluster</name>
        <dbReference type="ChEBI" id="CHEBI:49883"/>
        <label>1</label>
    </ligand>
</feature>
<feature type="binding site" evidence="1">
    <location>
        <position position="113"/>
    </location>
    <ligand>
        <name>[4Fe-4S] cluster</name>
        <dbReference type="ChEBI" id="CHEBI:49883"/>
        <label>2</label>
    </ligand>
</feature>
<feature type="binding site" evidence="1">
    <location>
        <position position="116"/>
    </location>
    <ligand>
        <name>[4Fe-4S] cluster</name>
        <dbReference type="ChEBI" id="CHEBI:49883"/>
        <label>2</label>
    </ligand>
</feature>
<feature type="binding site" evidence="1">
    <location>
        <position position="119"/>
    </location>
    <ligand>
        <name>[4Fe-4S] cluster</name>
        <dbReference type="ChEBI" id="CHEBI:49883"/>
        <label>2</label>
    </ligand>
</feature>
<feature type="binding site" evidence="1">
    <location>
        <position position="123"/>
    </location>
    <ligand>
        <name>[4Fe-4S] cluster</name>
        <dbReference type="ChEBI" id="CHEBI:49883"/>
        <label>3</label>
    </ligand>
</feature>
<feature type="binding site" evidence="1">
    <location>
        <position position="143"/>
    </location>
    <ligand>
        <name>[4Fe-4S] cluster</name>
        <dbReference type="ChEBI" id="CHEBI:49883"/>
        <label>3</label>
    </ligand>
</feature>
<feature type="binding site" evidence="1">
    <location>
        <position position="146"/>
    </location>
    <ligand>
        <name>[4Fe-4S] cluster</name>
        <dbReference type="ChEBI" id="CHEBI:49883"/>
        <label>3</label>
    </ligand>
</feature>
<feature type="binding site" evidence="1">
    <location>
        <position position="149"/>
    </location>
    <ligand>
        <name>[4Fe-4S] cluster</name>
        <dbReference type="ChEBI" id="CHEBI:49883"/>
        <label>3</label>
    </ligand>
</feature>
<feature type="binding site" evidence="1">
    <location>
        <position position="153"/>
    </location>
    <ligand>
        <name>[4Fe-4S] cluster</name>
        <dbReference type="ChEBI" id="CHEBI:49883"/>
        <label>2</label>
    </ligand>
</feature>
<gene>
    <name evidence="1" type="primary">rnfB</name>
    <name type="ordered locus">BUAPTUC7_113</name>
</gene>
<name>RNFB_BUCAT</name>
<proteinExistence type="inferred from homology"/>
<evidence type="ECO:0000255" key="1">
    <source>
        <dbReference type="HAMAP-Rule" id="MF_00463"/>
    </source>
</evidence>
<keyword id="KW-0004">4Fe-4S</keyword>
<keyword id="KW-0997">Cell inner membrane</keyword>
<keyword id="KW-1003">Cell membrane</keyword>
<keyword id="KW-0249">Electron transport</keyword>
<keyword id="KW-0408">Iron</keyword>
<keyword id="KW-0411">Iron-sulfur</keyword>
<keyword id="KW-0472">Membrane</keyword>
<keyword id="KW-0479">Metal-binding</keyword>
<keyword id="KW-0677">Repeat</keyword>
<keyword id="KW-1278">Translocase</keyword>
<keyword id="KW-0813">Transport</keyword>
<dbReference type="EC" id="7.-.-.-" evidence="1"/>
<dbReference type="EMBL" id="CP001158">
    <property type="protein sequence ID" value="ACL29934.1"/>
    <property type="molecule type" value="Genomic_DNA"/>
</dbReference>
<dbReference type="RefSeq" id="WP_012619434.1">
    <property type="nucleotide sequence ID" value="NC_011834.1"/>
</dbReference>
<dbReference type="KEGG" id="bau:BUAPTUC7_113"/>
<dbReference type="HOGENOM" id="CLU_063448_2_0_6"/>
<dbReference type="GO" id="GO:0005886">
    <property type="term" value="C:plasma membrane"/>
    <property type="evidence" value="ECO:0007669"/>
    <property type="project" value="UniProtKB-SubCell"/>
</dbReference>
<dbReference type="GO" id="GO:0051539">
    <property type="term" value="F:4 iron, 4 sulfur cluster binding"/>
    <property type="evidence" value="ECO:0007669"/>
    <property type="project" value="UniProtKB-UniRule"/>
</dbReference>
<dbReference type="GO" id="GO:0009055">
    <property type="term" value="F:electron transfer activity"/>
    <property type="evidence" value="ECO:0007669"/>
    <property type="project" value="InterPro"/>
</dbReference>
<dbReference type="GO" id="GO:0046872">
    <property type="term" value="F:metal ion binding"/>
    <property type="evidence" value="ECO:0007669"/>
    <property type="project" value="UniProtKB-KW"/>
</dbReference>
<dbReference type="GO" id="GO:0022900">
    <property type="term" value="P:electron transport chain"/>
    <property type="evidence" value="ECO:0007669"/>
    <property type="project" value="UniProtKB-UniRule"/>
</dbReference>
<dbReference type="Gene3D" id="3.30.70.20">
    <property type="match status" value="1"/>
</dbReference>
<dbReference type="Gene3D" id="1.10.15.40">
    <property type="entry name" value="Electron transport complex subunit B, putative Fe-S cluster"/>
    <property type="match status" value="1"/>
</dbReference>
<dbReference type="HAMAP" id="MF_00463">
    <property type="entry name" value="RsxB_RnfB"/>
    <property type="match status" value="1"/>
</dbReference>
<dbReference type="InterPro" id="IPR007202">
    <property type="entry name" value="4Fe-4S_dom"/>
</dbReference>
<dbReference type="InterPro" id="IPR017896">
    <property type="entry name" value="4Fe4S_Fe-S-bd"/>
</dbReference>
<dbReference type="InterPro" id="IPR017900">
    <property type="entry name" value="4Fe4S_Fe_S_CS"/>
</dbReference>
<dbReference type="InterPro" id="IPR010207">
    <property type="entry name" value="Elect_transpt_cplx_RnfB/RsxB"/>
</dbReference>
<dbReference type="InterPro" id="IPR016463">
    <property type="entry name" value="RnfB/RsxB_Proteobac"/>
</dbReference>
<dbReference type="InterPro" id="IPR050294">
    <property type="entry name" value="RnfB_subfamily"/>
</dbReference>
<dbReference type="NCBIfam" id="TIGR01944">
    <property type="entry name" value="rnfB"/>
    <property type="match status" value="1"/>
</dbReference>
<dbReference type="PANTHER" id="PTHR42859:SF3">
    <property type="entry name" value="ION-TRANSLOCATING OXIDOREDUCTASE COMPLEX SUBUNIT B"/>
    <property type="match status" value="1"/>
</dbReference>
<dbReference type="PANTHER" id="PTHR42859">
    <property type="entry name" value="OXIDOREDUCTASE"/>
    <property type="match status" value="1"/>
</dbReference>
<dbReference type="Pfam" id="PF14697">
    <property type="entry name" value="Fer4_21"/>
    <property type="match status" value="1"/>
</dbReference>
<dbReference type="Pfam" id="PF04060">
    <property type="entry name" value="FeS"/>
    <property type="match status" value="1"/>
</dbReference>
<dbReference type="PIRSF" id="PIRSF005784">
    <property type="entry name" value="Elect_transpt_RnfB"/>
    <property type="match status" value="1"/>
</dbReference>
<dbReference type="SUPFAM" id="SSF54862">
    <property type="entry name" value="4Fe-4S ferredoxins"/>
    <property type="match status" value="1"/>
</dbReference>
<dbReference type="PROSITE" id="PS51656">
    <property type="entry name" value="4FE4S"/>
    <property type="match status" value="1"/>
</dbReference>
<dbReference type="PROSITE" id="PS00198">
    <property type="entry name" value="4FE4S_FER_1"/>
    <property type="match status" value="2"/>
</dbReference>
<dbReference type="PROSITE" id="PS51379">
    <property type="entry name" value="4FE4S_FER_2"/>
    <property type="match status" value="2"/>
</dbReference>
<comment type="function">
    <text evidence="1">Part of a membrane-bound complex that couples electron transfer with translocation of ions across the membrane.</text>
</comment>
<comment type="cofactor">
    <cofactor evidence="1">
        <name>[4Fe-4S] cluster</name>
        <dbReference type="ChEBI" id="CHEBI:49883"/>
    </cofactor>
    <text evidence="1">Binds 3 [4Fe-4S] clusters.</text>
</comment>
<comment type="subunit">
    <text evidence="1">The complex is composed of six subunits: RnfA, RnfB, RnfC, RnfD, RnfE and RnfG.</text>
</comment>
<comment type="subcellular location">
    <subcellularLocation>
        <location evidence="1">Cell inner membrane</location>
    </subcellularLocation>
</comment>
<comment type="similarity">
    <text evidence="1">Belongs to the 4Fe4S bacterial-type ferredoxin family. RnfB subfamily.</text>
</comment>
<accession>B8D719</accession>
<protein>
    <recommendedName>
        <fullName evidence="1">Ion-translocating oxidoreductase complex subunit B</fullName>
        <ecNumber evidence="1">7.-.-.-</ecNumber>
    </recommendedName>
    <alternativeName>
        <fullName evidence="1">Rnf electron transport complex subunit B</fullName>
    </alternativeName>
</protein>
<reference key="1">
    <citation type="journal article" date="2009" name="Science">
        <title>The dynamics and time scale of ongoing genomic erosion in symbiotic bacteria.</title>
        <authorList>
            <person name="Moran N.A."/>
            <person name="McLaughlin H.J."/>
            <person name="Sorek R."/>
        </authorList>
    </citation>
    <scope>NUCLEOTIDE SEQUENCE [LARGE SCALE GENOMIC DNA]</scope>
    <source>
        <strain>Tuc7</strain>
    </source>
</reference>
<sequence length="167" mass="18391">MITLIIFSFLSFLLGIILSFTAYKFRSQEDPIVEIVNELLPQSQCAQCGYSGCYPYAKAIVENSEKINKCIPGGTDLISAISSVLSIEVPEKNLIITHKKQKNNTVLINESNCVGCSKCASFCPVDAIVGAPNFIHTVLQEFCTGCNICLLHCPTNCIEIKKETYEE</sequence>